<sequence>MKEKDYWEEAWLTSCTSIHDHHCDCGSWRDHLWTLCALDDADLAAAADIIEREEADGGEDFGFVDGDPGDAGG</sequence>
<accession>Q8QVM0</accession>
<reference key="1">
    <citation type="journal article" date="2002" name="J. Gen. Virol.">
        <title>Genomic characterization of TT viruses (TTVs) in pigs, cats and dogs and their relatedness with species-specific TTVs in primates and tupaias.</title>
        <authorList>
            <person name="Okamoto H."/>
            <person name="Takahashi M."/>
            <person name="Nishizawa T."/>
            <person name="Tawara A."/>
            <person name="Fukai K."/>
            <person name="Muramatsu U."/>
            <person name="Naito Y."/>
            <person name="Yoshikawa A."/>
        </authorList>
    </citation>
    <scope>NUCLEOTIDE SEQUENCE [GENOMIC DNA]</scope>
</reference>
<dbReference type="EMBL" id="AB076001">
    <property type="protein sequence ID" value="BAB90847.1"/>
    <property type="molecule type" value="Genomic_DNA"/>
</dbReference>
<dbReference type="RefSeq" id="YP_003587830.1">
    <property type="nucleotide sequence ID" value="NC_014070.1"/>
</dbReference>
<dbReference type="SMR" id="Q8QVM0"/>
<dbReference type="KEGG" id="vg:9086573"/>
<dbReference type="Proteomes" id="UP000007079">
    <property type="component" value="Segment"/>
</dbReference>
<dbReference type="InterPro" id="IPR004118">
    <property type="entry name" value="HEV_TT_vir_Orf2/Gyrovir_Vp2_N"/>
</dbReference>
<dbReference type="Pfam" id="PF02957">
    <property type="entry name" value="TT_ORF2-like"/>
    <property type="match status" value="1"/>
</dbReference>
<keyword id="KW-1185">Reference proteome</keyword>
<gene>
    <name type="ORF">ORF1</name>
</gene>
<name>ORF2_TTVI1</name>
<organismHost>
    <name type="scientific">Sus scrofa</name>
    <name type="common">Pig</name>
    <dbReference type="NCBI Taxonomy" id="9823"/>
</organismHost>
<feature type="chain" id="PRO_0000404284" description="Uncharacterized ORF2 protein">
    <location>
        <begin position="1"/>
        <end position="73"/>
    </location>
</feature>
<protein>
    <recommendedName>
        <fullName>Uncharacterized ORF2 protein</fullName>
    </recommendedName>
</protein>
<proteinExistence type="predicted"/>
<organism>
    <name type="scientific">Torque teno sus virus 1 (isolate Sd-TTV31)</name>
    <dbReference type="NCBI Taxonomy" id="766190"/>
    <lineage>
        <taxon>Viruses</taxon>
        <taxon>Viruses incertae sedis</taxon>
        <taxon>Anelloviridae</taxon>
        <taxon>Iotatorquevirus</taxon>
        <taxon>Iotatorquevirus suida1a</taxon>
    </lineage>
</organism>